<reference key="1">
    <citation type="journal article" date="1988" name="J. Biol. Chem.">
        <title>Nucleotide sequence and glucocorticoid regulation of the mRNAs for the isoenzymes of rat aspartate aminotransferase.</title>
        <authorList>
            <person name="Pave-Preux M."/>
            <person name="Ferry N."/>
            <person name="Bouguet J."/>
            <person name="Hanoune J."/>
            <person name="Barouki R."/>
        </authorList>
    </citation>
    <scope>NUCLEOTIDE SEQUENCE [MRNA]</scope>
    <scope>TISSUE SPECIFICITY</scope>
    <scope>INDUCTION</scope>
</reference>
<reference key="2">
    <citation type="journal article" date="1988" name="J. Biochem.">
        <title>Rat cytosolic aspartate aminotransferase: molecular cloning of cDNA and expression in Escherichia coli.</title>
        <authorList>
            <person name="Horio Y."/>
            <person name="Tanaka T."/>
            <person name="Taketoshi M."/>
            <person name="Nagashima F."/>
            <person name="Tanase S."/>
            <person name="Morino Y."/>
            <person name="Wada H."/>
        </authorList>
    </citation>
    <scope>NUCLEOTIDE SEQUENCE [MRNA]</scope>
    <scope>FUNCTION</scope>
    <scope>CATALYTIC ACTIVITY</scope>
</reference>
<reference key="3">
    <citation type="journal article" date="2004" name="Genome Res.">
        <title>The status, quality, and expansion of the NIH full-length cDNA project: the Mammalian Gene Collection (MGC).</title>
        <authorList>
            <consortium name="The MGC Project Team"/>
        </authorList>
    </citation>
    <scope>NUCLEOTIDE SEQUENCE [LARGE SCALE MRNA]</scope>
    <source>
        <tissue>Prostate</tissue>
    </source>
</reference>
<reference key="4">
    <citation type="journal article" date="1990" name="J. Biol. Chem.">
        <title>Hormonal discrimination among transcription start sites of aspartate aminotransferase.</title>
        <authorList>
            <person name="Pave-Preux M."/>
            <person name="Aggerbeck M."/>
            <person name="Veyssier C."/>
            <person name="Bousquet-Lemercier B."/>
            <person name="Hanoune J."/>
            <person name="Barouki R."/>
        </authorList>
    </citation>
    <scope>NUCLEOTIDE SEQUENCE [GENOMIC DNA] OF 1-39</scope>
</reference>
<reference key="5">
    <citation type="submission" date="2007-07" db="UniProtKB">
        <authorList>
            <person name="Lubec G."/>
            <person name="Afjehi-Sadat L."/>
            <person name="Kang S.U."/>
        </authorList>
    </citation>
    <scope>PROTEIN SEQUENCE OF 21-32; 34-42; 101-122; 217-236; 268-276 AND 388-396</scope>
    <scope>IDENTIFICATION BY MASS SPECTROMETRY</scope>
    <source>
        <strain>Sprague-Dawley</strain>
        <tissue>Brain</tissue>
        <tissue>Spinal cord</tissue>
    </source>
</reference>
<reference key="6">
    <citation type="journal article" date="1982" name="Acta Med. Okayama">
        <title>Purification and characterization of cysteine aminotransferase from rat liver cytosol.</title>
        <authorList>
            <person name="Akagi R."/>
        </authorList>
    </citation>
    <scope>CYSTEINE AMINOTRANSFERASE ACTIVITY</scope>
    <scope>CATALYTIC ACTIVITY</scope>
    <scope>BIOPHYSICOCHEMICAL PROPERTIES</scope>
    <scope>ACTIVITY REGULATION</scope>
    <scope>FUNCTION</scope>
</reference>
<reference key="7">
    <citation type="journal article" date="1988" name="J. Biochem.">
        <title>Rat cytosolic aspartate aminotransferase: regulation of its mRNA and contribution to gluconeogenesis.</title>
        <authorList>
            <person name="Horio Y."/>
            <person name="Tanaka T."/>
            <person name="Taketoshi M."/>
            <person name="Uno T."/>
            <person name="Wada H."/>
        </authorList>
    </citation>
    <scope>INDUCTION</scope>
    <scope>FUNCTION</scope>
</reference>
<reference key="8">
    <citation type="journal article" date="2007" name="J. Biol. Chem.">
        <title>Cytosolic aspartate aminotransferase, a new partner in adipocyte glyceroneogenesis and an atypical target of thiazolidinedione.</title>
        <authorList>
            <person name="Tordjman J."/>
            <person name="Leroyer S."/>
            <person name="Chauvet G."/>
            <person name="Quette J."/>
            <person name="Chauvet C."/>
            <person name="Tomkiewicz C."/>
            <person name="Chapron C."/>
            <person name="Barouki R."/>
            <person name="Forest C."/>
            <person name="Aggerbeck M."/>
            <person name="Antoine B."/>
        </authorList>
    </citation>
    <scope>FUNCTION</scope>
    <scope>INDUCTION</scope>
</reference>
<reference key="9">
    <citation type="journal article" date="2011" name="Antioxid. Redox Signal.">
        <title>Oxygen-inducible glutamate oxaloacetate transaminase as protective switch transforming neurotoxic glutamate to metabolic fuel during acute ischemic stroke.</title>
        <authorList>
            <person name="Rink C."/>
            <person name="Gnyawali S."/>
            <person name="Peterson L."/>
            <person name="Khanna S."/>
        </authorList>
    </citation>
    <scope>FUNCTION</scope>
    <scope>INDUCTION</scope>
</reference>
<reference key="10">
    <citation type="journal article" date="2011" name="J. Cereb. Blood Flow Metab.">
        <title>Neuroprotection by glutamate oxaloacetate transaminase in ischemic stroke: an experimental study.</title>
        <authorList>
            <person name="Campos F."/>
            <person name="Sobrino T."/>
            <person name="Ramos-Cabrer P."/>
            <person name="Argibay B."/>
            <person name="Agulla J."/>
            <person name="Perez-Mato M."/>
            <person name="Rodriguez-Gonzalez R."/>
            <person name="Brea D."/>
            <person name="Castillo J."/>
        </authorList>
    </citation>
    <scope>FUNCTION</scope>
</reference>
<reference key="11">
    <citation type="journal article" date="2012" name="Nat. Commun.">
        <title>Quantitative maps of protein phosphorylation sites across 14 different rat organs and tissues.</title>
        <authorList>
            <person name="Lundby A."/>
            <person name="Secher A."/>
            <person name="Lage K."/>
            <person name="Nordsborg N.B."/>
            <person name="Dmytriyev A."/>
            <person name="Lundby C."/>
            <person name="Olsen J.V."/>
        </authorList>
    </citation>
    <scope>PHOSPHORYLATION [LARGE SCALE ANALYSIS] AT SER-46 AND SER-149</scope>
    <scope>IDENTIFICATION BY MASS SPECTROMETRY [LARGE SCALE ANALYSIS]</scope>
</reference>
<proteinExistence type="evidence at protein level"/>
<organism>
    <name type="scientific">Rattus norvegicus</name>
    <name type="common">Rat</name>
    <dbReference type="NCBI Taxonomy" id="10116"/>
    <lineage>
        <taxon>Eukaryota</taxon>
        <taxon>Metazoa</taxon>
        <taxon>Chordata</taxon>
        <taxon>Craniata</taxon>
        <taxon>Vertebrata</taxon>
        <taxon>Euteleostomi</taxon>
        <taxon>Mammalia</taxon>
        <taxon>Eutheria</taxon>
        <taxon>Euarchontoglires</taxon>
        <taxon>Glires</taxon>
        <taxon>Rodentia</taxon>
        <taxon>Myomorpha</taxon>
        <taxon>Muroidea</taxon>
        <taxon>Muridae</taxon>
        <taxon>Murinae</taxon>
        <taxon>Rattus</taxon>
    </lineage>
</organism>
<sequence length="413" mass="46429">MAPPSFFAQVPQAPPVLVFKLIADFRDDPDPRKVNLGVGAYRTDDSQPWVLPVVRKVEQKIANDHSLNHEYLPILGLAEFRSCASQLVLGDNSPALRENRVGGVQSLGGTGALRIGADFLGRWYNGTDNKNTPVYVSSPTWENHNGVFSAAGFKDIRSYRYWDAEKRGLDLQGFLNDLENAPEFSIFVLHACAHNPTGTDPTEEEWKQIAAVMKRRFLFPFFDSAYQGFASGDLEKDAWAIRYFVSEGFELFCAQSFSKNFGLYNERVGNLTVVGKEHDSVLRVLSQMEKIVRITWSNPPAQGARIVATTLSNPELFKEWKGNVKTMADRILTMRSELRARLEALKTPGTWSHITEQIGMFSFTGLNPKQVEYLVNEKHIYLMPSGRINMCGLTTKNLDYVATSINEAVTKFQ</sequence>
<accession>P13221</accession>
<accession>Q64570</accession>
<accession>Q6P721</accession>
<keyword id="KW-0028">Amino-acid biosynthesis</keyword>
<keyword id="KW-0032">Aminotransferase</keyword>
<keyword id="KW-0963">Cytoplasm</keyword>
<keyword id="KW-0903">Direct protein sequencing</keyword>
<keyword id="KW-0597">Phosphoprotein</keyword>
<keyword id="KW-0663">Pyridoxal phosphate</keyword>
<keyword id="KW-1185">Reference proteome</keyword>
<keyword id="KW-0808">Transferase</keyword>
<evidence type="ECO:0000250" key="1"/>
<evidence type="ECO:0000250" key="2">
    <source>
        <dbReference type="UniProtKB" id="P17174"/>
    </source>
</evidence>
<evidence type="ECO:0000269" key="3">
    <source>
    </source>
</evidence>
<evidence type="ECO:0000269" key="4">
    <source>
    </source>
</evidence>
<evidence type="ECO:0000269" key="5">
    <source>
    </source>
</evidence>
<evidence type="ECO:0000269" key="6">
    <source>
    </source>
</evidence>
<evidence type="ECO:0000269" key="7">
    <source>
    </source>
</evidence>
<evidence type="ECO:0000269" key="8">
    <source>
    </source>
</evidence>
<evidence type="ECO:0000269" key="9">
    <source>
    </source>
</evidence>
<evidence type="ECO:0000303" key="10">
    <source>
    </source>
</evidence>
<evidence type="ECO:0000305" key="11"/>
<evidence type="ECO:0000312" key="12">
    <source>
        <dbReference type="RGD" id="2721"/>
    </source>
</evidence>
<evidence type="ECO:0007744" key="13">
    <source>
    </source>
</evidence>
<protein>
    <recommendedName>
        <fullName evidence="11">Aspartate aminotransferase, cytoplasmic</fullName>
        <shortName evidence="10">cAspAT</shortName>
        <ecNumber evidence="6">2.6.1.1</ecNumber>
        <ecNumber evidence="9">2.6.1.3</ecNumber>
    </recommendedName>
    <alternativeName>
        <fullName>Cysteine aminotransferase, cytoplasmic</fullName>
    </alternativeName>
    <alternativeName>
        <fullName>Cysteine transaminase, cytoplasmic</fullName>
        <shortName>cCAT</shortName>
    </alternativeName>
    <alternativeName>
        <fullName>Glutamate oxaloacetate transaminase 1</fullName>
    </alternativeName>
    <alternativeName>
        <fullName>Transaminase A</fullName>
    </alternativeName>
</protein>
<gene>
    <name evidence="12" type="primary">Got1</name>
</gene>
<feature type="chain" id="PRO_0000123883" description="Aspartate aminotransferase, cytoplasmic">
    <location>
        <begin position="1"/>
        <end position="413"/>
    </location>
</feature>
<feature type="binding site" evidence="1">
    <location>
        <position position="39"/>
    </location>
    <ligand>
        <name>L-aspartate</name>
        <dbReference type="ChEBI" id="CHEBI:29991"/>
    </ligand>
</feature>
<feature type="binding site" evidence="1">
    <location>
        <position position="141"/>
    </location>
    <ligand>
        <name>L-aspartate</name>
        <dbReference type="ChEBI" id="CHEBI:29991"/>
    </ligand>
</feature>
<feature type="binding site" evidence="1">
    <location>
        <position position="195"/>
    </location>
    <ligand>
        <name>L-aspartate</name>
        <dbReference type="ChEBI" id="CHEBI:29991"/>
    </ligand>
</feature>
<feature type="binding site" evidence="1">
    <location>
        <position position="387"/>
    </location>
    <ligand>
        <name>L-aspartate</name>
        <dbReference type="ChEBI" id="CHEBI:29991"/>
    </ligand>
</feature>
<feature type="modified residue" description="Phosphoserine" evidence="13">
    <location>
        <position position="46"/>
    </location>
</feature>
<feature type="modified residue" description="Phosphoserine" evidence="13">
    <location>
        <position position="149"/>
    </location>
</feature>
<feature type="modified residue" description="N6-(pyridoxal phosphate)lysine">
    <location>
        <position position="259"/>
    </location>
</feature>
<feature type="sequence conflict" description="In Ref. 1; AAA40769." evidence="11" ref="1">
    <original>R</original>
    <variation>T</variation>
    <location>
        <position position="55"/>
    </location>
</feature>
<feature type="sequence conflict" description="In Ref. 1; AAA40769." evidence="11" ref="1">
    <original>R</original>
    <variation>G</variation>
    <location>
        <position position="100"/>
    </location>
</feature>
<feature type="sequence conflict" description="In Ref. 1; AAA40769." evidence="11" ref="1">
    <original>G</original>
    <variation>A</variation>
    <location>
        <position position="109"/>
    </location>
</feature>
<feature type="sequence conflict" description="In Ref. 1; AAA40769." evidence="11" ref="1">
    <original>G</original>
    <variation>A</variation>
    <location>
        <position position="121"/>
    </location>
</feature>
<feature type="sequence conflict" description="In Ref. 2; BAA00183." evidence="11" ref="2">
    <original>N</original>
    <variation>I</variation>
    <location>
        <position position="125"/>
    </location>
</feature>
<feature type="sequence conflict" description="In Ref. 1; AAA40769." evidence="11" ref="1">
    <original>A</original>
    <variation>P</variation>
    <location>
        <position position="254"/>
    </location>
</feature>
<feature type="sequence conflict" description="In Ref. 2; BAA00183." evidence="11" ref="2">
    <original>L</original>
    <variation>F</variation>
    <location>
        <position position="366"/>
    </location>
</feature>
<name>AATC_RAT</name>
<comment type="function">
    <text evidence="3 4 5 6 7 9">Biosynthesis of L-glutamate from L-aspartate or L-cysteine. Important regulator of levels of glutamate, the major excitatory neurotransmitter of the vertebrate central nervous system. Acts as a scavenger of glutamate in brain neuroprotection. The aspartate aminotransferase activity is involved in hepatic glucose synthesis during development and in adipocyte glyceroneogenesis. Using L-cysteine as substrate, regulates levels of mercaptopyruvate, an important source of hydrogen sulfide. Mercaptopyruvate is converted into H(2)S via the action of 3-mercaptopyruvate sulfurtransferase (3MST). Hydrogen sulfide is an important synaptic modulator and neuroprotectant in the brain.</text>
</comment>
<comment type="catalytic activity">
    <reaction evidence="6 9">
        <text>L-aspartate + 2-oxoglutarate = oxaloacetate + L-glutamate</text>
        <dbReference type="Rhea" id="RHEA:21824"/>
        <dbReference type="ChEBI" id="CHEBI:16452"/>
        <dbReference type="ChEBI" id="CHEBI:16810"/>
        <dbReference type="ChEBI" id="CHEBI:29985"/>
        <dbReference type="ChEBI" id="CHEBI:29991"/>
        <dbReference type="EC" id="2.6.1.1"/>
    </reaction>
    <physiologicalReaction direction="left-to-right" evidence="6">
        <dbReference type="Rhea" id="RHEA:21825"/>
    </physiologicalReaction>
</comment>
<comment type="catalytic activity">
    <reaction evidence="9">
        <text>L-cysteine + 2-oxoglutarate = 2-oxo-3-sulfanylpropanoate + L-glutamate</text>
        <dbReference type="Rhea" id="RHEA:17441"/>
        <dbReference type="ChEBI" id="CHEBI:16810"/>
        <dbReference type="ChEBI" id="CHEBI:29985"/>
        <dbReference type="ChEBI" id="CHEBI:35235"/>
        <dbReference type="ChEBI" id="CHEBI:57678"/>
        <dbReference type="EC" id="2.6.1.3"/>
    </reaction>
    <physiologicalReaction direction="left-to-right" evidence="9">
        <dbReference type="Rhea" id="RHEA:17442"/>
    </physiologicalReaction>
</comment>
<comment type="catalytic activity">
    <reaction evidence="2">
        <text>(2S)-2-aminobutanoate + 2-oxoglutarate = 2-oxobutanoate + L-glutamate</text>
        <dbReference type="Rhea" id="RHEA:70223"/>
        <dbReference type="ChEBI" id="CHEBI:16763"/>
        <dbReference type="ChEBI" id="CHEBI:16810"/>
        <dbReference type="ChEBI" id="CHEBI:29985"/>
        <dbReference type="ChEBI" id="CHEBI:74359"/>
    </reaction>
    <physiologicalReaction direction="right-to-left" evidence="2">
        <dbReference type="Rhea" id="RHEA:70225"/>
    </physiologicalReaction>
</comment>
<comment type="catalytic activity">
    <reaction evidence="9">
        <text>3-sulfino-L-alanine + 2-oxoglutarate = 3-sulfinopyruvate + L-glutamate</text>
        <dbReference type="Rhea" id="RHEA:70295"/>
        <dbReference type="ChEBI" id="CHEBI:16810"/>
        <dbReference type="ChEBI" id="CHEBI:29985"/>
        <dbReference type="ChEBI" id="CHEBI:61085"/>
        <dbReference type="ChEBI" id="CHEBI:140699"/>
    </reaction>
    <physiologicalReaction direction="right-to-left" evidence="9">
        <dbReference type="Rhea" id="RHEA:70297"/>
    </physiologicalReaction>
</comment>
<comment type="cofactor">
    <cofactor>
        <name>pyridoxal 5'-phosphate</name>
        <dbReference type="ChEBI" id="CHEBI:597326"/>
    </cofactor>
</comment>
<comment type="activity regulation">
    <text evidence="9">Inhibited by L-aspartate.</text>
</comment>
<comment type="biophysicochemical properties">
    <kinetics>
        <KM evidence="9">22.2 mM for L-cysteine</KM>
        <KM evidence="9">0.06 mM for 2-oxoglutarate</KM>
    </kinetics>
    <phDependence>
        <text evidence="9">Optimum pH is 9.7.</text>
    </phDependence>
</comment>
<comment type="subunit">
    <text>Homodimer.</text>
</comment>
<comment type="subcellular location">
    <subcellularLocation>
        <location>Cytoplasm</location>
    </subcellularLocation>
</comment>
<comment type="tissue specificity">
    <text evidence="8">Expressed in liver and kidney.</text>
</comment>
<comment type="induction">
    <text evidence="3 5 7 8">In liver and kidney, by glucocorticod hormones. Levels in the liver also increase 2-fold on animals fed on a high protein diet or during fasting. By hypoxia during cerebral ischemia.</text>
</comment>
<comment type="miscellaneous">
    <text>In eukaryotes there are cytoplasmic, mitochondrial and chloroplastic isozymes.</text>
</comment>
<comment type="similarity">
    <text evidence="11">Belongs to the class-I pyridoxal-phosphate-dependent aminotransferase family.</text>
</comment>
<dbReference type="EC" id="2.6.1.1" evidence="6"/>
<dbReference type="EC" id="2.6.1.3" evidence="9"/>
<dbReference type="EMBL" id="J04171">
    <property type="protein sequence ID" value="AAA40769.1"/>
    <property type="molecule type" value="mRNA"/>
</dbReference>
<dbReference type="EMBL" id="D00252">
    <property type="protein sequence ID" value="BAA00183.1"/>
    <property type="molecule type" value="mRNA"/>
</dbReference>
<dbReference type="EMBL" id="BC061877">
    <property type="protein sequence ID" value="AAH61877.1"/>
    <property type="molecule type" value="mRNA"/>
</dbReference>
<dbReference type="EMBL" id="J05263">
    <property type="protein sequence ID" value="AAA40842.1"/>
    <property type="molecule type" value="Genomic_DNA"/>
</dbReference>
<dbReference type="PIR" id="I55325">
    <property type="entry name" value="I55325"/>
</dbReference>
<dbReference type="PIR" id="JT0439">
    <property type="entry name" value="JT0439"/>
</dbReference>
<dbReference type="RefSeq" id="NP_036703.2">
    <property type="nucleotide sequence ID" value="NM_012571.2"/>
</dbReference>
<dbReference type="SMR" id="P13221"/>
<dbReference type="BioGRID" id="246568">
    <property type="interactions" value="1"/>
</dbReference>
<dbReference type="FunCoup" id="P13221">
    <property type="interactions" value="2231"/>
</dbReference>
<dbReference type="IntAct" id="P13221">
    <property type="interactions" value="1"/>
</dbReference>
<dbReference type="STRING" id="10116.ENSRNOP00000022309"/>
<dbReference type="GlyGen" id="P13221">
    <property type="glycosylation" value="1 site, 1 O-linked glycan (1 site)"/>
</dbReference>
<dbReference type="iPTMnet" id="P13221"/>
<dbReference type="PhosphoSitePlus" id="P13221"/>
<dbReference type="SwissPalm" id="P13221"/>
<dbReference type="jPOST" id="P13221"/>
<dbReference type="PaxDb" id="10116-ENSRNOP00000022309"/>
<dbReference type="GeneID" id="24401"/>
<dbReference type="KEGG" id="rno:24401"/>
<dbReference type="UCSC" id="RGD:2721">
    <property type="organism name" value="rat"/>
</dbReference>
<dbReference type="AGR" id="RGD:2721"/>
<dbReference type="CTD" id="2805"/>
<dbReference type="RGD" id="2721">
    <property type="gene designation" value="Got1"/>
</dbReference>
<dbReference type="VEuPathDB" id="HostDB:ENSRNOG00000016356"/>
<dbReference type="eggNOG" id="KOG1412">
    <property type="taxonomic scope" value="Eukaryota"/>
</dbReference>
<dbReference type="HOGENOM" id="CLU_032440_1_2_1"/>
<dbReference type="InParanoid" id="P13221"/>
<dbReference type="OrthoDB" id="6752799at2759"/>
<dbReference type="PhylomeDB" id="P13221"/>
<dbReference type="TreeFam" id="TF314089"/>
<dbReference type="BioCyc" id="MetaCyc:MONOMER-12468"/>
<dbReference type="Reactome" id="R-RNO-8963693">
    <property type="pathway name" value="Aspartate and asparagine metabolism"/>
</dbReference>
<dbReference type="Reactome" id="R-RNO-9856872">
    <property type="pathway name" value="Malate-aspartate shuttle"/>
</dbReference>
<dbReference type="SABIO-RK" id="P13221"/>
<dbReference type="PRO" id="PR:P13221"/>
<dbReference type="Proteomes" id="UP000002494">
    <property type="component" value="Chromosome 1"/>
</dbReference>
<dbReference type="Bgee" id="ENSRNOG00000016356">
    <property type="expression patterns" value="Expressed in heart and 20 other cell types or tissues"/>
</dbReference>
<dbReference type="GO" id="GO:0043679">
    <property type="term" value="C:axon terminus"/>
    <property type="evidence" value="ECO:0000314"/>
    <property type="project" value="RGD"/>
</dbReference>
<dbReference type="GO" id="GO:0005737">
    <property type="term" value="C:cytoplasm"/>
    <property type="evidence" value="ECO:0000266"/>
    <property type="project" value="RGD"/>
</dbReference>
<dbReference type="GO" id="GO:0005829">
    <property type="term" value="C:cytosol"/>
    <property type="evidence" value="ECO:0000266"/>
    <property type="project" value="RGD"/>
</dbReference>
<dbReference type="GO" id="GO:0031406">
    <property type="term" value="F:carboxylic acid binding"/>
    <property type="evidence" value="ECO:0000314"/>
    <property type="project" value="RGD"/>
</dbReference>
<dbReference type="GO" id="GO:0004069">
    <property type="term" value="F:L-aspartate:2-oxoglutarate aminotransferase activity"/>
    <property type="evidence" value="ECO:0000314"/>
    <property type="project" value="RGD"/>
</dbReference>
<dbReference type="GO" id="GO:0047801">
    <property type="term" value="F:L-cysteine transaminase activity"/>
    <property type="evidence" value="ECO:0000314"/>
    <property type="project" value="UniProtKB"/>
</dbReference>
<dbReference type="GO" id="GO:0004609">
    <property type="term" value="F:phosphatidylserine decarboxylase activity"/>
    <property type="evidence" value="ECO:0000266"/>
    <property type="project" value="RGD"/>
</dbReference>
<dbReference type="GO" id="GO:0030170">
    <property type="term" value="F:pyridoxal phosphate binding"/>
    <property type="evidence" value="ECO:0007669"/>
    <property type="project" value="InterPro"/>
</dbReference>
<dbReference type="GO" id="GO:0006103">
    <property type="term" value="P:2-oxoglutarate metabolic process"/>
    <property type="evidence" value="ECO:0000250"/>
    <property type="project" value="UniProtKB"/>
</dbReference>
<dbReference type="GO" id="GO:0006532">
    <property type="term" value="P:aspartate biosynthetic process"/>
    <property type="evidence" value="ECO:0000266"/>
    <property type="project" value="RGD"/>
</dbReference>
<dbReference type="GO" id="GO:0006533">
    <property type="term" value="P:aspartate catabolic process"/>
    <property type="evidence" value="ECO:0000266"/>
    <property type="project" value="RGD"/>
</dbReference>
<dbReference type="GO" id="GO:0006531">
    <property type="term" value="P:aspartate metabolic process"/>
    <property type="evidence" value="ECO:0000314"/>
    <property type="project" value="RGD"/>
</dbReference>
<dbReference type="GO" id="GO:0032869">
    <property type="term" value="P:cellular response to insulin stimulus"/>
    <property type="evidence" value="ECO:0000266"/>
    <property type="project" value="RGD"/>
</dbReference>
<dbReference type="GO" id="GO:0071260">
    <property type="term" value="P:cellular response to mechanical stimulus"/>
    <property type="evidence" value="ECO:0000314"/>
    <property type="project" value="RGD"/>
</dbReference>
<dbReference type="GO" id="GO:0043648">
    <property type="term" value="P:dicarboxylic acid metabolic process"/>
    <property type="evidence" value="ECO:0000314"/>
    <property type="project" value="RGD"/>
</dbReference>
<dbReference type="GO" id="GO:0055089">
    <property type="term" value="P:fatty acid homeostasis"/>
    <property type="evidence" value="ECO:0000266"/>
    <property type="project" value="RGD"/>
</dbReference>
<dbReference type="GO" id="GO:0006094">
    <property type="term" value="P:gluconeogenesis"/>
    <property type="evidence" value="ECO:0000266"/>
    <property type="project" value="RGD"/>
</dbReference>
<dbReference type="GO" id="GO:0019550">
    <property type="term" value="P:glutamate catabolic process to aspartate"/>
    <property type="evidence" value="ECO:0000266"/>
    <property type="project" value="RGD"/>
</dbReference>
<dbReference type="GO" id="GO:0006536">
    <property type="term" value="P:glutamate metabolic process"/>
    <property type="evidence" value="ECO:0000250"/>
    <property type="project" value="UniProtKB"/>
</dbReference>
<dbReference type="GO" id="GO:0006114">
    <property type="term" value="P:glycerol biosynthetic process"/>
    <property type="evidence" value="ECO:0000314"/>
    <property type="project" value="UniProtKB"/>
</dbReference>
<dbReference type="GO" id="GO:0097054">
    <property type="term" value="P:L-glutamate biosynthetic process"/>
    <property type="evidence" value="ECO:0000314"/>
    <property type="project" value="RGD"/>
</dbReference>
<dbReference type="GO" id="GO:0043490">
    <property type="term" value="P:malate-aspartate shuttle"/>
    <property type="evidence" value="ECO:0000266"/>
    <property type="project" value="RGD"/>
</dbReference>
<dbReference type="GO" id="GO:0032966">
    <property type="term" value="P:negative regulation of collagen biosynthetic process"/>
    <property type="evidence" value="ECO:0000315"/>
    <property type="project" value="RGD"/>
</dbReference>
<dbReference type="GO" id="GO:0051481">
    <property type="term" value="P:negative regulation of cytosolic calcium ion concentration"/>
    <property type="evidence" value="ECO:0000315"/>
    <property type="project" value="RGD"/>
</dbReference>
<dbReference type="GO" id="GO:0051902">
    <property type="term" value="P:negative regulation of mitochondrial depolarization"/>
    <property type="evidence" value="ECO:0000315"/>
    <property type="project" value="RGD"/>
</dbReference>
<dbReference type="GO" id="GO:0007219">
    <property type="term" value="P:Notch signaling pathway"/>
    <property type="evidence" value="ECO:0000266"/>
    <property type="project" value="RGD"/>
</dbReference>
<dbReference type="GO" id="GO:0006107">
    <property type="term" value="P:oxaloacetate metabolic process"/>
    <property type="evidence" value="ECO:0000314"/>
    <property type="project" value="RGD"/>
</dbReference>
<dbReference type="GO" id="GO:0030511">
    <property type="term" value="P:positive regulation of transforming growth factor beta receptor signaling pathway"/>
    <property type="evidence" value="ECO:0000315"/>
    <property type="project" value="RGD"/>
</dbReference>
<dbReference type="GO" id="GO:0046686">
    <property type="term" value="P:response to cadmium ion"/>
    <property type="evidence" value="ECO:0000270"/>
    <property type="project" value="RGD"/>
</dbReference>
<dbReference type="GO" id="GO:0009743">
    <property type="term" value="P:response to carbohydrate"/>
    <property type="evidence" value="ECO:0000270"/>
    <property type="project" value="RGD"/>
</dbReference>
<dbReference type="GO" id="GO:0051384">
    <property type="term" value="P:response to glucocorticoid"/>
    <property type="evidence" value="ECO:0000266"/>
    <property type="project" value="RGD"/>
</dbReference>
<dbReference type="GO" id="GO:0035902">
    <property type="term" value="P:response to immobilization stress"/>
    <property type="evidence" value="ECO:0000270"/>
    <property type="project" value="RGD"/>
</dbReference>
<dbReference type="GO" id="GO:1990267">
    <property type="term" value="P:response to transition metal nanoparticle"/>
    <property type="evidence" value="ECO:0000314"/>
    <property type="project" value="RGD"/>
</dbReference>
<dbReference type="GO" id="GO:0060290">
    <property type="term" value="P:transdifferentiation"/>
    <property type="evidence" value="ECO:0000315"/>
    <property type="project" value="RGD"/>
</dbReference>
<dbReference type="CDD" id="cd00609">
    <property type="entry name" value="AAT_like"/>
    <property type="match status" value="1"/>
</dbReference>
<dbReference type="FunFam" id="3.40.640.10:FF:000044">
    <property type="entry name" value="Aspartate aminotransferase"/>
    <property type="match status" value="1"/>
</dbReference>
<dbReference type="FunFam" id="3.90.1150.10:FF:000001">
    <property type="entry name" value="Aspartate aminotransferase"/>
    <property type="match status" value="1"/>
</dbReference>
<dbReference type="Gene3D" id="3.90.1150.10">
    <property type="entry name" value="Aspartate Aminotransferase, domain 1"/>
    <property type="match status" value="1"/>
</dbReference>
<dbReference type="Gene3D" id="3.40.640.10">
    <property type="entry name" value="Type I PLP-dependent aspartate aminotransferase-like (Major domain)"/>
    <property type="match status" value="1"/>
</dbReference>
<dbReference type="InterPro" id="IPR004839">
    <property type="entry name" value="Aminotransferase_I/II_large"/>
</dbReference>
<dbReference type="InterPro" id="IPR000796">
    <property type="entry name" value="Asp_trans"/>
</dbReference>
<dbReference type="InterPro" id="IPR004838">
    <property type="entry name" value="NHTrfase_class1_PyrdxlP-BS"/>
</dbReference>
<dbReference type="InterPro" id="IPR015424">
    <property type="entry name" value="PyrdxlP-dep_Trfase"/>
</dbReference>
<dbReference type="InterPro" id="IPR015421">
    <property type="entry name" value="PyrdxlP-dep_Trfase_major"/>
</dbReference>
<dbReference type="InterPro" id="IPR015422">
    <property type="entry name" value="PyrdxlP-dep_Trfase_small"/>
</dbReference>
<dbReference type="NCBIfam" id="NF006719">
    <property type="entry name" value="PRK09257.1"/>
    <property type="match status" value="1"/>
</dbReference>
<dbReference type="PANTHER" id="PTHR11879">
    <property type="entry name" value="ASPARTATE AMINOTRANSFERASE"/>
    <property type="match status" value="1"/>
</dbReference>
<dbReference type="PANTHER" id="PTHR11879:SF3">
    <property type="entry name" value="ASPARTATE AMINOTRANSFERASE, CYTOPLASMIC"/>
    <property type="match status" value="1"/>
</dbReference>
<dbReference type="Pfam" id="PF00155">
    <property type="entry name" value="Aminotran_1_2"/>
    <property type="match status" value="1"/>
</dbReference>
<dbReference type="PRINTS" id="PR00799">
    <property type="entry name" value="TRANSAMINASE"/>
</dbReference>
<dbReference type="SUPFAM" id="SSF53383">
    <property type="entry name" value="PLP-dependent transferases"/>
    <property type="match status" value="1"/>
</dbReference>
<dbReference type="PROSITE" id="PS00105">
    <property type="entry name" value="AA_TRANSFER_CLASS_1"/>
    <property type="match status" value="1"/>
</dbReference>